<keyword id="KW-0560">Oxidoreductase</keyword>
<keyword id="KW-0819">tRNA processing</keyword>
<dbReference type="EC" id="1.14.-.-" evidence="1"/>
<dbReference type="EMBL" id="AE017194">
    <property type="protein sequence ID" value="AAS40885.1"/>
    <property type="molecule type" value="Genomic_DNA"/>
</dbReference>
<dbReference type="SMR" id="Q73A25"/>
<dbReference type="KEGG" id="bca:BCE_1961"/>
<dbReference type="HOGENOM" id="CLU_038878_1_0_9"/>
<dbReference type="Proteomes" id="UP000002527">
    <property type="component" value="Chromosome"/>
</dbReference>
<dbReference type="GO" id="GO:0016705">
    <property type="term" value="F:oxidoreductase activity, acting on paired donors, with incorporation or reduction of molecular oxygen"/>
    <property type="evidence" value="ECO:0007669"/>
    <property type="project" value="UniProtKB-UniRule"/>
</dbReference>
<dbReference type="GO" id="GO:0006400">
    <property type="term" value="P:tRNA modification"/>
    <property type="evidence" value="ECO:0007669"/>
    <property type="project" value="UniProtKB-UniRule"/>
</dbReference>
<dbReference type="CDD" id="cd01518">
    <property type="entry name" value="RHOD_YceA"/>
    <property type="match status" value="1"/>
</dbReference>
<dbReference type="Gene3D" id="3.30.70.100">
    <property type="match status" value="1"/>
</dbReference>
<dbReference type="Gene3D" id="3.40.250.10">
    <property type="entry name" value="Rhodanese-like domain"/>
    <property type="match status" value="1"/>
</dbReference>
<dbReference type="HAMAP" id="MF_00469">
    <property type="entry name" value="TrhO"/>
    <property type="match status" value="1"/>
</dbReference>
<dbReference type="InterPro" id="IPR001763">
    <property type="entry name" value="Rhodanese-like_dom"/>
</dbReference>
<dbReference type="InterPro" id="IPR036873">
    <property type="entry name" value="Rhodanese-like_dom_sf"/>
</dbReference>
<dbReference type="InterPro" id="IPR022111">
    <property type="entry name" value="Rhodanese_C"/>
</dbReference>
<dbReference type="InterPro" id="IPR020936">
    <property type="entry name" value="TrhO"/>
</dbReference>
<dbReference type="InterPro" id="IPR040503">
    <property type="entry name" value="TRHO_N"/>
</dbReference>
<dbReference type="NCBIfam" id="NF001135">
    <property type="entry name" value="PRK00142.1-3"/>
    <property type="match status" value="1"/>
</dbReference>
<dbReference type="PANTHER" id="PTHR43268:SF3">
    <property type="entry name" value="RHODANESE-LIKE DOMAIN-CONTAINING PROTEIN 7-RELATED"/>
    <property type="match status" value="1"/>
</dbReference>
<dbReference type="PANTHER" id="PTHR43268">
    <property type="entry name" value="THIOSULFATE SULFURTRANSFERASE/RHODANESE-LIKE DOMAIN-CONTAINING PROTEIN 2"/>
    <property type="match status" value="1"/>
</dbReference>
<dbReference type="Pfam" id="PF00581">
    <property type="entry name" value="Rhodanese"/>
    <property type="match status" value="1"/>
</dbReference>
<dbReference type="Pfam" id="PF12368">
    <property type="entry name" value="Rhodanese_C"/>
    <property type="match status" value="1"/>
</dbReference>
<dbReference type="Pfam" id="PF17773">
    <property type="entry name" value="UPF0176_N"/>
    <property type="match status" value="1"/>
</dbReference>
<dbReference type="SMART" id="SM00450">
    <property type="entry name" value="RHOD"/>
    <property type="match status" value="1"/>
</dbReference>
<dbReference type="SUPFAM" id="SSF52821">
    <property type="entry name" value="Rhodanese/Cell cycle control phosphatase"/>
    <property type="match status" value="1"/>
</dbReference>
<dbReference type="PROSITE" id="PS50206">
    <property type="entry name" value="RHODANESE_3"/>
    <property type="match status" value="1"/>
</dbReference>
<proteinExistence type="inferred from homology"/>
<name>TRHO_BACC1</name>
<sequence>MATTKPYRVLLYYMYTTIENPEEFAAEHLAFCNSLELKGRILVAKEGINGTCSGTVEQTEKYMEAMNNDPRFDGIVFKIDEADGHAFKKMHVRPRPELVTLRLEDDINPHEITGKYLEPKDFYEAMKQEDTVIIDARNDYEFDLGHFKGAIKPDIESFRELPDWIRENKEVLEGKKILTYCTGGIRCEKFSGWLVREGYEDVSQLHGGIVTYGKDPEVQGELWDGQCYVFDERIAVPVNQKEHVIVGKDYFTGEPCERYVNCANPECNKKILCSEENEAKYLRACSHECRVSPRNRYVIQHELTEEQVAAALEKIEAGK</sequence>
<protein>
    <recommendedName>
        <fullName evidence="1">tRNA uridine(34) hydroxylase</fullName>
        <ecNumber evidence="1">1.14.-.-</ecNumber>
    </recommendedName>
    <alternativeName>
        <fullName evidence="1">tRNA hydroxylation protein O</fullName>
    </alternativeName>
</protein>
<comment type="function">
    <text evidence="1">Catalyzes oxygen-dependent 5-hydroxyuridine (ho5U) modification at position 34 in tRNAs.</text>
</comment>
<comment type="catalytic activity">
    <reaction evidence="1">
        <text>uridine(34) in tRNA + AH2 + O2 = 5-hydroxyuridine(34) in tRNA + A + H2O</text>
        <dbReference type="Rhea" id="RHEA:64224"/>
        <dbReference type="Rhea" id="RHEA-COMP:11727"/>
        <dbReference type="Rhea" id="RHEA-COMP:13381"/>
        <dbReference type="ChEBI" id="CHEBI:13193"/>
        <dbReference type="ChEBI" id="CHEBI:15377"/>
        <dbReference type="ChEBI" id="CHEBI:15379"/>
        <dbReference type="ChEBI" id="CHEBI:17499"/>
        <dbReference type="ChEBI" id="CHEBI:65315"/>
        <dbReference type="ChEBI" id="CHEBI:136877"/>
    </reaction>
</comment>
<comment type="similarity">
    <text evidence="1">Belongs to the TrhO family.</text>
</comment>
<accession>Q73A25</accession>
<evidence type="ECO:0000255" key="1">
    <source>
        <dbReference type="HAMAP-Rule" id="MF_00469"/>
    </source>
</evidence>
<gene>
    <name evidence="1" type="primary">trhO</name>
    <name type="ordered locus">BCE_1961</name>
</gene>
<feature type="chain" id="PRO_0000161438" description="tRNA uridine(34) hydroxylase">
    <location>
        <begin position="1"/>
        <end position="319"/>
    </location>
</feature>
<feature type="domain" description="Rhodanese" evidence="1">
    <location>
        <begin position="127"/>
        <end position="221"/>
    </location>
</feature>
<feature type="active site" description="Cysteine persulfide intermediate" evidence="1">
    <location>
        <position position="181"/>
    </location>
</feature>
<organism>
    <name type="scientific">Bacillus cereus (strain ATCC 10987 / NRS 248)</name>
    <dbReference type="NCBI Taxonomy" id="222523"/>
    <lineage>
        <taxon>Bacteria</taxon>
        <taxon>Bacillati</taxon>
        <taxon>Bacillota</taxon>
        <taxon>Bacilli</taxon>
        <taxon>Bacillales</taxon>
        <taxon>Bacillaceae</taxon>
        <taxon>Bacillus</taxon>
        <taxon>Bacillus cereus group</taxon>
    </lineage>
</organism>
<reference key="1">
    <citation type="journal article" date="2004" name="Nucleic Acids Res.">
        <title>The genome sequence of Bacillus cereus ATCC 10987 reveals metabolic adaptations and a large plasmid related to Bacillus anthracis pXO1.</title>
        <authorList>
            <person name="Rasko D.A."/>
            <person name="Ravel J."/>
            <person name="Oekstad O.A."/>
            <person name="Helgason E."/>
            <person name="Cer R.Z."/>
            <person name="Jiang L."/>
            <person name="Shores K.A."/>
            <person name="Fouts D.E."/>
            <person name="Tourasse N.J."/>
            <person name="Angiuoli S.V."/>
            <person name="Kolonay J.F."/>
            <person name="Nelson W.C."/>
            <person name="Kolstoe A.-B."/>
            <person name="Fraser C.M."/>
            <person name="Read T.D."/>
        </authorList>
    </citation>
    <scope>NUCLEOTIDE SEQUENCE [LARGE SCALE GENOMIC DNA]</scope>
    <source>
        <strain>ATCC 10987 / NRS 248</strain>
    </source>
</reference>